<sequence length="147" mass="16000">MVHWTAEEKATIASVWGKVDIEQDGHDALSRLLVVYPWTQRYFSSFGNLSNVSAVSGNVKVKAHGNKVLSAVGSAIQHLDDVKSHLKGLSKSHAEDLHVDPENFKRLADVLVIVLAAKLGSAFTPQVQAVWEKLNATLVAALSHGYF</sequence>
<dbReference type="EMBL" id="Y00501">
    <property type="protein sequence ID" value="CAA68554.1"/>
    <property type="molecule type" value="Genomic_DNA"/>
</dbReference>
<dbReference type="EMBL" id="CR760812">
    <property type="protein sequence ID" value="CAJ83218.1"/>
    <property type="molecule type" value="mRNA"/>
</dbReference>
<dbReference type="PIR" id="S06308">
    <property type="entry name" value="HBXLLW"/>
</dbReference>
<dbReference type="RefSeq" id="NP_001016495.1">
    <property type="nucleotide sequence ID" value="NM_001016495.2"/>
</dbReference>
<dbReference type="SMR" id="P08423"/>
<dbReference type="FunCoup" id="P08423">
    <property type="interactions" value="36"/>
</dbReference>
<dbReference type="STRING" id="8364.ENSXETP00000009242"/>
<dbReference type="PaxDb" id="8364-ENSXETP00000053075"/>
<dbReference type="GeneID" id="549249"/>
<dbReference type="KEGG" id="xtr:549249"/>
<dbReference type="AGR" id="Xenbase:XB-GENE-5722135"/>
<dbReference type="CTD" id="3046"/>
<dbReference type="Xenbase" id="XB-GENE-5722135">
    <property type="gene designation" value="hbe1"/>
</dbReference>
<dbReference type="eggNOG" id="KOG3378">
    <property type="taxonomic scope" value="Eukaryota"/>
</dbReference>
<dbReference type="InParanoid" id="P08423"/>
<dbReference type="OMA" id="NFKAMYA"/>
<dbReference type="OrthoDB" id="9886081at2759"/>
<dbReference type="Proteomes" id="UP000008143">
    <property type="component" value="Chromosome 9"/>
</dbReference>
<dbReference type="GO" id="GO:0005833">
    <property type="term" value="C:hemoglobin complex"/>
    <property type="evidence" value="ECO:0007669"/>
    <property type="project" value="InterPro"/>
</dbReference>
<dbReference type="GO" id="GO:0020037">
    <property type="term" value="F:heme binding"/>
    <property type="evidence" value="ECO:0007669"/>
    <property type="project" value="InterPro"/>
</dbReference>
<dbReference type="GO" id="GO:0046872">
    <property type="term" value="F:metal ion binding"/>
    <property type="evidence" value="ECO:0007669"/>
    <property type="project" value="UniProtKB-KW"/>
</dbReference>
<dbReference type="GO" id="GO:0019825">
    <property type="term" value="F:oxygen binding"/>
    <property type="evidence" value="ECO:0007669"/>
    <property type="project" value="InterPro"/>
</dbReference>
<dbReference type="GO" id="GO:0005344">
    <property type="term" value="F:oxygen carrier activity"/>
    <property type="evidence" value="ECO:0007669"/>
    <property type="project" value="UniProtKB-KW"/>
</dbReference>
<dbReference type="CDD" id="cd08925">
    <property type="entry name" value="Hb-beta-like"/>
    <property type="match status" value="1"/>
</dbReference>
<dbReference type="FunFam" id="1.10.490.10:FF:000001">
    <property type="entry name" value="Hemoglobin subunit beta"/>
    <property type="match status" value="1"/>
</dbReference>
<dbReference type="Gene3D" id="1.10.490.10">
    <property type="entry name" value="Globins"/>
    <property type="match status" value="1"/>
</dbReference>
<dbReference type="InterPro" id="IPR000971">
    <property type="entry name" value="Globin"/>
</dbReference>
<dbReference type="InterPro" id="IPR009050">
    <property type="entry name" value="Globin-like_sf"/>
</dbReference>
<dbReference type="InterPro" id="IPR012292">
    <property type="entry name" value="Globin/Proto"/>
</dbReference>
<dbReference type="InterPro" id="IPR002337">
    <property type="entry name" value="Hemoglobin_b"/>
</dbReference>
<dbReference type="InterPro" id="IPR050056">
    <property type="entry name" value="Hemoglobin_oxygen_transport"/>
</dbReference>
<dbReference type="PANTHER" id="PTHR11442">
    <property type="entry name" value="HEMOGLOBIN FAMILY MEMBER"/>
    <property type="match status" value="1"/>
</dbReference>
<dbReference type="PANTHER" id="PTHR11442:SF7">
    <property type="entry name" value="HEMOGLOBIN SUBUNIT EPSILON"/>
    <property type="match status" value="1"/>
</dbReference>
<dbReference type="Pfam" id="PF00042">
    <property type="entry name" value="Globin"/>
    <property type="match status" value="1"/>
</dbReference>
<dbReference type="PRINTS" id="PR00814">
    <property type="entry name" value="BETAHAEM"/>
</dbReference>
<dbReference type="SUPFAM" id="SSF46458">
    <property type="entry name" value="Globin-like"/>
    <property type="match status" value="1"/>
</dbReference>
<dbReference type="PROSITE" id="PS01033">
    <property type="entry name" value="GLOBIN"/>
    <property type="match status" value="1"/>
</dbReference>
<name>HBB2_XENTR</name>
<protein>
    <recommendedName>
        <fullName>Hemoglobin subunit beta-2</fullName>
    </recommendedName>
    <alternativeName>
        <fullName>Beta-2-globin</fullName>
    </alternativeName>
    <alternativeName>
        <fullName>Hemoglobin beta-2 chain</fullName>
    </alternativeName>
    <alternativeName>
        <fullName>Larval beta-globin</fullName>
    </alternativeName>
</protein>
<gene>
    <name type="primary">hbb2</name>
    <name type="ORF">TTpA004i19.1</name>
</gene>
<keyword id="KW-0349">Heme</keyword>
<keyword id="KW-0408">Iron</keyword>
<keyword id="KW-0479">Metal-binding</keyword>
<keyword id="KW-0561">Oxygen transport</keyword>
<keyword id="KW-1185">Reference proteome</keyword>
<keyword id="KW-0813">Transport</keyword>
<comment type="function">
    <text>This is a larval (tadpole) beta-globin.</text>
</comment>
<comment type="subunit">
    <text>Heterotetramer of two alpha chains and two beta chains.</text>
</comment>
<comment type="tissue specificity">
    <text>Red blood cells.</text>
</comment>
<comment type="similarity">
    <text evidence="1">Belongs to the globin family.</text>
</comment>
<proteinExistence type="evidence at transcript level"/>
<feature type="initiator methionine" description="Removed">
    <location>
        <position position="1"/>
    </location>
</feature>
<feature type="chain" id="PRO_0000053159" description="Hemoglobin subunit beta-2">
    <location>
        <begin position="2"/>
        <end position="147"/>
    </location>
</feature>
<feature type="domain" description="Globin" evidence="1">
    <location>
        <begin position="3"/>
        <end position="147"/>
    </location>
</feature>
<feature type="binding site" description="distal binding residue">
    <location>
        <position position="64"/>
    </location>
    <ligand>
        <name>heme b</name>
        <dbReference type="ChEBI" id="CHEBI:60344"/>
    </ligand>
    <ligandPart>
        <name>Fe</name>
        <dbReference type="ChEBI" id="CHEBI:18248"/>
    </ligandPart>
</feature>
<feature type="binding site" description="proximal binding residue">
    <location>
        <position position="93"/>
    </location>
    <ligand>
        <name>heme b</name>
        <dbReference type="ChEBI" id="CHEBI:60344"/>
    </ligand>
    <ligandPart>
        <name>Fe</name>
        <dbReference type="ChEBI" id="CHEBI:18248"/>
    </ligandPart>
</feature>
<accession>P08423</accession>
<accession>Q28HN1</accession>
<reference key="1">
    <citation type="journal article" date="1987" name="Nucleic Acids Res.">
        <title>Nucleotide sequence of the Xenopus tropicalis larval beta globin gene.</title>
        <authorList>
            <person name="Knoechel W."/>
            <person name="Beck J."/>
            <person name="Meyerhof W."/>
        </authorList>
    </citation>
    <scope>NUCLEOTIDE SEQUENCE [GENOMIC DNA]</scope>
</reference>
<reference key="2">
    <citation type="submission" date="2006-03" db="EMBL/GenBank/DDBJ databases">
        <authorList>
            <consortium name="Sanger Xenopus tropicalis EST/cDNA project"/>
        </authorList>
    </citation>
    <scope>NUCLEOTIDE SEQUENCE [LARGE SCALE MRNA]</scope>
    <source>
        <tissue>Tadpole</tissue>
    </source>
</reference>
<organism>
    <name type="scientific">Xenopus tropicalis</name>
    <name type="common">Western clawed frog</name>
    <name type="synonym">Silurana tropicalis</name>
    <dbReference type="NCBI Taxonomy" id="8364"/>
    <lineage>
        <taxon>Eukaryota</taxon>
        <taxon>Metazoa</taxon>
        <taxon>Chordata</taxon>
        <taxon>Craniata</taxon>
        <taxon>Vertebrata</taxon>
        <taxon>Euteleostomi</taxon>
        <taxon>Amphibia</taxon>
        <taxon>Batrachia</taxon>
        <taxon>Anura</taxon>
        <taxon>Pipoidea</taxon>
        <taxon>Pipidae</taxon>
        <taxon>Xenopodinae</taxon>
        <taxon>Xenopus</taxon>
        <taxon>Silurana</taxon>
    </lineage>
</organism>
<evidence type="ECO:0000255" key="1">
    <source>
        <dbReference type="PROSITE-ProRule" id="PRU00238"/>
    </source>
</evidence>